<accession>A4YCP2</accession>
<keyword id="KW-0067">ATP-binding</keyword>
<keyword id="KW-0436">Ligase</keyword>
<keyword id="KW-0460">Magnesium</keyword>
<keyword id="KW-0464">Manganese</keyword>
<keyword id="KW-0479">Metal-binding</keyword>
<keyword id="KW-0547">Nucleotide-binding</keyword>
<keyword id="KW-0658">Purine biosynthesis</keyword>
<keyword id="KW-1185">Reference proteome</keyword>
<protein>
    <recommendedName>
        <fullName evidence="2">5-formaminoimidazole-4-carboxamide-1-(beta)-D-ribofuranosyl 5'-monophosphate synthetase</fullName>
        <ecNumber evidence="2">6.3.4.23</ecNumber>
    </recommendedName>
    <alternativeName>
        <fullName evidence="2">5-aminoimidazole-4-carboxamide-1-beta-D-ribofuranosyl 5'-monophosphate--formate ligase</fullName>
    </alternativeName>
</protein>
<sequence length="332" mass="37742">MLLLTLASHSSLQILHGAKREGFETGIVVNGKREGFYRRFSFIDNFYVYSSEDEAVEKINGTSNSVFVPHGSLIEYIGMERVSRIRTPIFGNRNLFPWESNQSKKMKLLELSNIKTPMKFENPEDVDRMVIVKLPGAKGGRGYFIGRNKQEVKEGIRRLQEKGLINNVEELIIQEYVIGIPMYFQFFYSPMLQRVEMTGIDIRYETNVDGLRRLPSDIKAEPTFVVAGNIPAVARESILPSVYEYAENFVKTTKNVVPPGAIGPFCLESIVTDTLDVVVFEFSGRIVAGTNLYVDGSPYSWLYWDEPMSVGRRIGREINLAIQKNRLNEVTT</sequence>
<dbReference type="EC" id="6.3.4.23" evidence="2"/>
<dbReference type="EMBL" id="CP000682">
    <property type="protein sequence ID" value="ABP94194.1"/>
    <property type="molecule type" value="Genomic_DNA"/>
</dbReference>
<dbReference type="RefSeq" id="WP_011921163.1">
    <property type="nucleotide sequence ID" value="NC_009440.1"/>
</dbReference>
<dbReference type="SMR" id="A4YCP2"/>
<dbReference type="STRING" id="399549.Msed_0017"/>
<dbReference type="GeneID" id="91756866"/>
<dbReference type="KEGG" id="mse:Msed_0017"/>
<dbReference type="eggNOG" id="arCOG04346">
    <property type="taxonomic scope" value="Archaea"/>
</dbReference>
<dbReference type="HOGENOM" id="CLU_065084_0_0_2"/>
<dbReference type="UniPathway" id="UPA00074">
    <property type="reaction ID" value="UER00134"/>
</dbReference>
<dbReference type="Proteomes" id="UP000000242">
    <property type="component" value="Chromosome"/>
</dbReference>
<dbReference type="GO" id="GO:0005524">
    <property type="term" value="F:ATP binding"/>
    <property type="evidence" value="ECO:0007669"/>
    <property type="project" value="UniProtKB-KW"/>
</dbReference>
<dbReference type="GO" id="GO:0016879">
    <property type="term" value="F:ligase activity, forming carbon-nitrogen bonds"/>
    <property type="evidence" value="ECO:0007669"/>
    <property type="project" value="UniProtKB-UniRule"/>
</dbReference>
<dbReference type="GO" id="GO:0000287">
    <property type="term" value="F:magnesium ion binding"/>
    <property type="evidence" value="ECO:0007669"/>
    <property type="project" value="InterPro"/>
</dbReference>
<dbReference type="GO" id="GO:0006189">
    <property type="term" value="P:'de novo' IMP biosynthetic process"/>
    <property type="evidence" value="ECO:0007669"/>
    <property type="project" value="UniProtKB-UniRule"/>
</dbReference>
<dbReference type="Gene3D" id="3.40.50.20">
    <property type="match status" value="1"/>
</dbReference>
<dbReference type="Gene3D" id="3.30.1490.20">
    <property type="entry name" value="ATP-grasp fold, A domain"/>
    <property type="match status" value="1"/>
</dbReference>
<dbReference type="Gene3D" id="3.30.470.20">
    <property type="entry name" value="ATP-grasp fold, B domain"/>
    <property type="match status" value="1"/>
</dbReference>
<dbReference type="HAMAP" id="MF_01163">
    <property type="entry name" value="IMP_biosynth_PurP"/>
    <property type="match status" value="1"/>
</dbReference>
<dbReference type="InterPro" id="IPR013815">
    <property type="entry name" value="ATP_grasp_subdomain_1"/>
</dbReference>
<dbReference type="InterPro" id="IPR023656">
    <property type="entry name" value="IMP_biosynth_PurP"/>
</dbReference>
<dbReference type="InterPro" id="IPR009720">
    <property type="entry name" value="IMP_biosynth_PurP_C"/>
</dbReference>
<dbReference type="InterPro" id="IPR010672">
    <property type="entry name" value="IMP_biosynth_PurP_N"/>
</dbReference>
<dbReference type="InterPro" id="IPR016185">
    <property type="entry name" value="PreATP-grasp_dom_sf"/>
</dbReference>
<dbReference type="NCBIfam" id="NF009778">
    <property type="entry name" value="PRK13278.1-1"/>
    <property type="match status" value="1"/>
</dbReference>
<dbReference type="PANTHER" id="PTHR38147:SF2">
    <property type="entry name" value="5-FORMAMINOIMIDAZOLE-4-CARBOXAMIDE-1-(BETA)-D-RIBOFURANOSYL 5'-MONOPHOSPHATE SYNTHETASE"/>
    <property type="match status" value="1"/>
</dbReference>
<dbReference type="PANTHER" id="PTHR38147">
    <property type="entry name" value="5-FORMAMINOIMIDAZOLE-4-CARBOXAMIDE-1-(BETA)-D-RIBOFURANOSYL 5'-MONOPHOSPHATE SYNTHETASE-RELATED"/>
    <property type="match status" value="1"/>
</dbReference>
<dbReference type="Pfam" id="PF06849">
    <property type="entry name" value="DUF1246"/>
    <property type="match status" value="1"/>
</dbReference>
<dbReference type="Pfam" id="PF06973">
    <property type="entry name" value="DUF1297"/>
    <property type="match status" value="1"/>
</dbReference>
<dbReference type="PIRSF" id="PIRSF004602">
    <property type="entry name" value="ATPgrasp_PurP"/>
    <property type="match status" value="1"/>
</dbReference>
<dbReference type="SUPFAM" id="SSF56059">
    <property type="entry name" value="Glutathione synthetase ATP-binding domain-like"/>
    <property type="match status" value="1"/>
</dbReference>
<dbReference type="SUPFAM" id="SSF52440">
    <property type="entry name" value="PreATP-grasp domain"/>
    <property type="match status" value="1"/>
</dbReference>
<feature type="chain" id="PRO_0000348617" description="5-formaminoimidazole-4-carboxamide-1-(beta)-D-ribofuranosyl 5'-monophosphate synthetase">
    <location>
        <begin position="1"/>
        <end position="332"/>
    </location>
</feature>
<feature type="domain" description="ATP-grasp" evidence="2">
    <location>
        <begin position="93"/>
        <end position="323"/>
    </location>
</feature>
<feature type="binding site" evidence="2">
    <location>
        <position position="9"/>
    </location>
    <ligand>
        <name>5-amino-1-(5-phospho-beta-D-ribosyl)imidazole-4-carboxamide</name>
        <dbReference type="ChEBI" id="CHEBI:58475"/>
    </ligand>
</feature>
<feature type="binding site" evidence="2">
    <location>
        <position position="72"/>
    </location>
    <ligand>
        <name>5-amino-1-(5-phospho-beta-D-ribosyl)imidazole-4-carboxamide</name>
        <dbReference type="ChEBI" id="CHEBI:58475"/>
    </ligand>
</feature>
<feature type="binding site" evidence="2">
    <location>
        <begin position="123"/>
        <end position="183"/>
    </location>
    <ligand>
        <name>ATP</name>
        <dbReference type="ChEBI" id="CHEBI:30616"/>
    </ligand>
</feature>
<feature type="binding site" evidence="2">
    <location>
        <position position="205"/>
    </location>
    <ligand>
        <name>ATP</name>
        <dbReference type="ChEBI" id="CHEBI:30616"/>
    </ligand>
</feature>
<feature type="binding site" evidence="2">
    <location>
        <position position="229"/>
    </location>
    <ligand>
        <name>5-amino-1-(5-phospho-beta-D-ribosyl)imidazole-4-carboxamide</name>
        <dbReference type="ChEBI" id="CHEBI:58475"/>
    </ligand>
</feature>
<feature type="binding site" evidence="2">
    <location>
        <position position="268"/>
    </location>
    <ligand>
        <name>Mg(2+)</name>
        <dbReference type="ChEBI" id="CHEBI:18420"/>
    </ligand>
</feature>
<feature type="binding site" evidence="2">
    <location>
        <position position="281"/>
    </location>
    <ligand>
        <name>Mg(2+)</name>
        <dbReference type="ChEBI" id="CHEBI:18420"/>
    </ligand>
</feature>
<evidence type="ECO:0000250" key="1"/>
<evidence type="ECO:0000255" key="2">
    <source>
        <dbReference type="HAMAP-Rule" id="MF_01163"/>
    </source>
</evidence>
<comment type="function">
    <text evidence="2">Catalyzes the ATP- and formate-dependent formylation of 5-aminoimidazole-4-carboxamide-1-beta-d-ribofuranosyl 5'-monophosphate (AICAR) to 5-formaminoimidazole-4-carboxamide-1-beta-d-ribofuranosyl 5'-monophosphate (FAICAR) in the absence of folates.</text>
</comment>
<comment type="catalytic activity">
    <reaction evidence="2">
        <text>5-amino-1-(5-phospho-beta-D-ribosyl)imidazole-4-carboxamide + formate + ATP = 5-formamido-1-(5-phospho-D-ribosyl)imidazole-4-carboxamide + ADP + phosphate</text>
        <dbReference type="Rhea" id="RHEA:24836"/>
        <dbReference type="ChEBI" id="CHEBI:15740"/>
        <dbReference type="ChEBI" id="CHEBI:30616"/>
        <dbReference type="ChEBI" id="CHEBI:43474"/>
        <dbReference type="ChEBI" id="CHEBI:58467"/>
        <dbReference type="ChEBI" id="CHEBI:58475"/>
        <dbReference type="ChEBI" id="CHEBI:456216"/>
        <dbReference type="EC" id="6.3.4.23"/>
    </reaction>
</comment>
<comment type="cofactor">
    <cofactor evidence="1">
        <name>Mg(2+)</name>
        <dbReference type="ChEBI" id="CHEBI:18420"/>
    </cofactor>
    <cofactor evidence="1">
        <name>Mn(2+)</name>
        <dbReference type="ChEBI" id="CHEBI:29035"/>
    </cofactor>
    <text evidence="1">Binds 1 Mg(2+) or Mn(2+) ion per subunit.</text>
</comment>
<comment type="pathway">
    <text evidence="2">Purine metabolism; IMP biosynthesis via de novo pathway; 5-formamido-1-(5-phospho-D-ribosyl)imidazole-4-carboxamide from 5-amino-1-(5-phospho-D-ribosyl)imidazole-4-carboxamide (formate route): step 1/1.</text>
</comment>
<comment type="similarity">
    <text evidence="2">Belongs to the phosphohexose mutase family.</text>
</comment>
<name>PURP_METS5</name>
<reference key="1">
    <citation type="journal article" date="2008" name="Appl. Environ. Microbiol.">
        <title>The genome sequence of the metal-mobilizing, extremely thermoacidophilic archaeon Metallosphaera sedula provides insights into bioleaching-associated metabolism.</title>
        <authorList>
            <person name="Auernik K.S."/>
            <person name="Maezato Y."/>
            <person name="Blum P.H."/>
            <person name="Kelly R.M."/>
        </authorList>
    </citation>
    <scope>NUCLEOTIDE SEQUENCE [LARGE SCALE GENOMIC DNA]</scope>
    <source>
        <strain>ATCC 51363 / DSM 5348 / JCM 9185 / NBRC 15509 / TH2</strain>
    </source>
</reference>
<organism>
    <name type="scientific">Metallosphaera sedula (strain ATCC 51363 / DSM 5348 / JCM 9185 / NBRC 15509 / TH2)</name>
    <dbReference type="NCBI Taxonomy" id="399549"/>
    <lineage>
        <taxon>Archaea</taxon>
        <taxon>Thermoproteota</taxon>
        <taxon>Thermoprotei</taxon>
        <taxon>Sulfolobales</taxon>
        <taxon>Sulfolobaceae</taxon>
        <taxon>Metallosphaera</taxon>
    </lineage>
</organism>
<proteinExistence type="inferred from homology"/>
<gene>
    <name evidence="2" type="primary">purP</name>
    <name type="ordered locus">Msed_0017</name>
</gene>